<comment type="function">
    <text evidence="1">Catalyzes the ferrous insertion into protoporphyrin IX.</text>
</comment>
<comment type="catalytic activity">
    <reaction evidence="1">
        <text>heme b + 2 H(+) = protoporphyrin IX + Fe(2+)</text>
        <dbReference type="Rhea" id="RHEA:22584"/>
        <dbReference type="ChEBI" id="CHEBI:15378"/>
        <dbReference type="ChEBI" id="CHEBI:29033"/>
        <dbReference type="ChEBI" id="CHEBI:57306"/>
        <dbReference type="ChEBI" id="CHEBI:60344"/>
        <dbReference type="EC" id="4.98.1.1"/>
    </reaction>
</comment>
<comment type="pathway">
    <text evidence="1">Porphyrin-containing compound metabolism; protoheme biosynthesis; protoheme from protoporphyrin-IX: step 1/1.</text>
</comment>
<comment type="subcellular location">
    <subcellularLocation>
        <location evidence="1">Cytoplasm</location>
    </subcellularLocation>
</comment>
<comment type="similarity">
    <text evidence="1">Belongs to the ferrochelatase family.</text>
</comment>
<organism>
    <name type="scientific">Rhizobium leguminosarum bv. trifolii (strain WSM2304)</name>
    <dbReference type="NCBI Taxonomy" id="395492"/>
    <lineage>
        <taxon>Bacteria</taxon>
        <taxon>Pseudomonadati</taxon>
        <taxon>Pseudomonadota</taxon>
        <taxon>Alphaproteobacteria</taxon>
        <taxon>Hyphomicrobiales</taxon>
        <taxon>Rhizobiaceae</taxon>
        <taxon>Rhizobium/Agrobacterium group</taxon>
        <taxon>Rhizobium</taxon>
    </lineage>
</organism>
<reference key="1">
    <citation type="journal article" date="2010" name="Stand. Genomic Sci.">
        <title>Complete genome sequence of Rhizobium leguminosarum bv trifolii strain WSM2304, an effective microsymbiont of the South American clover Trifolium polymorphum.</title>
        <authorList>
            <person name="Reeve W."/>
            <person name="O'Hara G."/>
            <person name="Chain P."/>
            <person name="Ardley J."/>
            <person name="Brau L."/>
            <person name="Nandesena K."/>
            <person name="Tiwari R."/>
            <person name="Malfatti S."/>
            <person name="Kiss H."/>
            <person name="Lapidus A."/>
            <person name="Copeland A."/>
            <person name="Nolan M."/>
            <person name="Land M."/>
            <person name="Ivanova N."/>
            <person name="Mavromatis K."/>
            <person name="Markowitz V."/>
            <person name="Kyrpides N."/>
            <person name="Melino V."/>
            <person name="Denton M."/>
            <person name="Yates R."/>
            <person name="Howieson J."/>
        </authorList>
    </citation>
    <scope>NUCLEOTIDE SEQUENCE [LARGE SCALE GENOMIC DNA]</scope>
    <source>
        <strain>WSM2304</strain>
    </source>
</reference>
<evidence type="ECO:0000255" key="1">
    <source>
        <dbReference type="HAMAP-Rule" id="MF_00323"/>
    </source>
</evidence>
<gene>
    <name evidence="1" type="primary">hemH</name>
    <name type="ordered locus">Rleg2_3304</name>
</gene>
<feature type="chain" id="PRO_1000116071" description="Ferrochelatase">
    <location>
        <begin position="1"/>
        <end position="344"/>
    </location>
</feature>
<feature type="binding site" evidence="1">
    <location>
        <position position="214"/>
    </location>
    <ligand>
        <name>Fe cation</name>
        <dbReference type="ChEBI" id="CHEBI:24875"/>
    </ligand>
</feature>
<feature type="binding site" evidence="1">
    <location>
        <position position="295"/>
    </location>
    <ligand>
        <name>Fe cation</name>
        <dbReference type="ChEBI" id="CHEBI:24875"/>
    </ligand>
</feature>
<proteinExistence type="inferred from homology"/>
<sequence length="344" mass="39549">MTADTSLRPADHPAVKSGKVGVLLVNLGTPDGTDYTSMRRYLREFLTDRRVIEWSPWKWYPILFGVVLNTRPRKVGKAYELIWNKEKNESYLRTYTRNQSELMAEHLKDLATVKVDWAMRYGTPSIASRIEALKQEGCDRIVLFPLYPQYAAATTATVNDKAFQKLLSMRWQPALRTVPDYHDDETYIEALATSVEKHLATLDWKPEMLLASFHGIPMSYFKQGDPYYCQCQKTGRLLRERLGLTKENFMVTFQSRFGPEEWLQPYTDKTVEKLAQDGVKRIAVINPGFVSDCLETLEEIAEQAAHSFHENGGEKFAHIPCLNDGEDGMTVLEKVVRRELQGWI</sequence>
<protein>
    <recommendedName>
        <fullName evidence="1">Ferrochelatase</fullName>
        <ecNumber evidence="1">4.98.1.1</ecNumber>
    </recommendedName>
    <alternativeName>
        <fullName evidence="1">Heme synthase</fullName>
    </alternativeName>
    <alternativeName>
        <fullName evidence="1">Protoheme ferro-lyase</fullName>
    </alternativeName>
</protein>
<accession>B5ZPG3</accession>
<name>HEMH_RHILW</name>
<dbReference type="EC" id="4.98.1.1" evidence="1"/>
<dbReference type="EMBL" id="CP001191">
    <property type="protein sequence ID" value="ACI56571.1"/>
    <property type="molecule type" value="Genomic_DNA"/>
</dbReference>
<dbReference type="RefSeq" id="WP_012558914.1">
    <property type="nucleotide sequence ID" value="NC_011369.1"/>
</dbReference>
<dbReference type="SMR" id="B5ZPG3"/>
<dbReference type="STRING" id="395492.Rleg2_3304"/>
<dbReference type="KEGG" id="rlt:Rleg2_3304"/>
<dbReference type="eggNOG" id="COG0276">
    <property type="taxonomic scope" value="Bacteria"/>
</dbReference>
<dbReference type="HOGENOM" id="CLU_018884_0_0_5"/>
<dbReference type="UniPathway" id="UPA00252">
    <property type="reaction ID" value="UER00325"/>
</dbReference>
<dbReference type="Proteomes" id="UP000008330">
    <property type="component" value="Chromosome"/>
</dbReference>
<dbReference type="GO" id="GO:0005737">
    <property type="term" value="C:cytoplasm"/>
    <property type="evidence" value="ECO:0007669"/>
    <property type="project" value="UniProtKB-SubCell"/>
</dbReference>
<dbReference type="GO" id="GO:0004325">
    <property type="term" value="F:ferrochelatase activity"/>
    <property type="evidence" value="ECO:0007669"/>
    <property type="project" value="UniProtKB-UniRule"/>
</dbReference>
<dbReference type="GO" id="GO:0046872">
    <property type="term" value="F:metal ion binding"/>
    <property type="evidence" value="ECO:0007669"/>
    <property type="project" value="UniProtKB-KW"/>
</dbReference>
<dbReference type="GO" id="GO:0006783">
    <property type="term" value="P:heme biosynthetic process"/>
    <property type="evidence" value="ECO:0007669"/>
    <property type="project" value="UniProtKB-UniRule"/>
</dbReference>
<dbReference type="CDD" id="cd00419">
    <property type="entry name" value="Ferrochelatase_C"/>
    <property type="match status" value="1"/>
</dbReference>
<dbReference type="CDD" id="cd03411">
    <property type="entry name" value="Ferrochelatase_N"/>
    <property type="match status" value="1"/>
</dbReference>
<dbReference type="FunFam" id="3.40.50.1400:FF:000002">
    <property type="entry name" value="Ferrochelatase"/>
    <property type="match status" value="1"/>
</dbReference>
<dbReference type="Gene3D" id="3.40.50.1400">
    <property type="match status" value="2"/>
</dbReference>
<dbReference type="HAMAP" id="MF_00323">
    <property type="entry name" value="Ferrochelatase"/>
    <property type="match status" value="1"/>
</dbReference>
<dbReference type="InterPro" id="IPR001015">
    <property type="entry name" value="Ferrochelatase"/>
</dbReference>
<dbReference type="InterPro" id="IPR019772">
    <property type="entry name" value="Ferrochelatase_AS"/>
</dbReference>
<dbReference type="InterPro" id="IPR033644">
    <property type="entry name" value="Ferrochelatase_C"/>
</dbReference>
<dbReference type="InterPro" id="IPR033659">
    <property type="entry name" value="Ferrochelatase_N"/>
</dbReference>
<dbReference type="NCBIfam" id="TIGR00109">
    <property type="entry name" value="hemH"/>
    <property type="match status" value="1"/>
</dbReference>
<dbReference type="PANTHER" id="PTHR11108">
    <property type="entry name" value="FERROCHELATASE"/>
    <property type="match status" value="1"/>
</dbReference>
<dbReference type="PANTHER" id="PTHR11108:SF1">
    <property type="entry name" value="FERROCHELATASE, MITOCHONDRIAL"/>
    <property type="match status" value="1"/>
</dbReference>
<dbReference type="Pfam" id="PF00762">
    <property type="entry name" value="Ferrochelatase"/>
    <property type="match status" value="1"/>
</dbReference>
<dbReference type="SUPFAM" id="SSF53800">
    <property type="entry name" value="Chelatase"/>
    <property type="match status" value="1"/>
</dbReference>
<dbReference type="PROSITE" id="PS00534">
    <property type="entry name" value="FERROCHELATASE"/>
    <property type="match status" value="1"/>
</dbReference>
<keyword id="KW-0963">Cytoplasm</keyword>
<keyword id="KW-0350">Heme biosynthesis</keyword>
<keyword id="KW-0408">Iron</keyword>
<keyword id="KW-0456">Lyase</keyword>
<keyword id="KW-0479">Metal-binding</keyword>
<keyword id="KW-0627">Porphyrin biosynthesis</keyword>
<keyword id="KW-1185">Reference proteome</keyword>